<accession>O19062</accession>
<dbReference type="EMBL" id="AB005545">
    <property type="protein sequence ID" value="BAA21473.1"/>
    <property type="molecule type" value="mRNA"/>
</dbReference>
<dbReference type="EMBL" id="AY714055">
    <property type="protein sequence ID" value="AAU13779.1"/>
    <property type="molecule type" value="mRNA"/>
</dbReference>
<dbReference type="RefSeq" id="NP_999009.1">
    <property type="nucleotide sequence ID" value="NM_213844.2"/>
</dbReference>
<dbReference type="SMR" id="O19062"/>
<dbReference type="FunCoup" id="O19062">
    <property type="interactions" value="147"/>
</dbReference>
<dbReference type="STRING" id="9823.ENSSSCP00000061045"/>
<dbReference type="PaxDb" id="9823-ENSSSCP00000029570"/>
<dbReference type="PeptideAtlas" id="O19062"/>
<dbReference type="Ensembl" id="ENSSSCT00025007241.1">
    <property type="protein sequence ID" value="ENSSSCP00025002973.1"/>
    <property type="gene ID" value="ENSSSCG00025005374.1"/>
</dbReference>
<dbReference type="GeneID" id="396842"/>
<dbReference type="KEGG" id="ssc:396842"/>
<dbReference type="CTD" id="1401"/>
<dbReference type="eggNOG" id="ENOG502S201">
    <property type="taxonomic scope" value="Eukaryota"/>
</dbReference>
<dbReference type="InParanoid" id="O19062"/>
<dbReference type="OrthoDB" id="547680at2759"/>
<dbReference type="Proteomes" id="UP000008227">
    <property type="component" value="Unplaced"/>
</dbReference>
<dbReference type="Proteomes" id="UP000314985">
    <property type="component" value="Unplaced"/>
</dbReference>
<dbReference type="Proteomes" id="UP000694570">
    <property type="component" value="Unplaced"/>
</dbReference>
<dbReference type="Proteomes" id="UP000694571">
    <property type="component" value="Unplaced"/>
</dbReference>
<dbReference type="Proteomes" id="UP000694720">
    <property type="component" value="Unplaced"/>
</dbReference>
<dbReference type="Proteomes" id="UP000694722">
    <property type="component" value="Unplaced"/>
</dbReference>
<dbReference type="Proteomes" id="UP000694723">
    <property type="component" value="Unplaced"/>
</dbReference>
<dbReference type="Proteomes" id="UP000694724">
    <property type="component" value="Unplaced"/>
</dbReference>
<dbReference type="Proteomes" id="UP000694725">
    <property type="component" value="Unplaced"/>
</dbReference>
<dbReference type="Proteomes" id="UP000694726">
    <property type="component" value="Unplaced"/>
</dbReference>
<dbReference type="Proteomes" id="UP000694727">
    <property type="component" value="Unplaced"/>
</dbReference>
<dbReference type="Proteomes" id="UP000694728">
    <property type="component" value="Unplaced"/>
</dbReference>
<dbReference type="GO" id="GO:0005615">
    <property type="term" value="C:extracellular space"/>
    <property type="evidence" value="ECO:0000318"/>
    <property type="project" value="GO_Central"/>
</dbReference>
<dbReference type="GO" id="GO:0001849">
    <property type="term" value="F:complement component C1q complex binding"/>
    <property type="evidence" value="ECO:0000318"/>
    <property type="project" value="GO_Central"/>
</dbReference>
<dbReference type="GO" id="GO:0030169">
    <property type="term" value="F:low-density lipoprotein particle binding"/>
    <property type="evidence" value="ECO:0000318"/>
    <property type="project" value="GO_Central"/>
</dbReference>
<dbReference type="GO" id="GO:0046872">
    <property type="term" value="F:metal ion binding"/>
    <property type="evidence" value="ECO:0007669"/>
    <property type="project" value="UniProtKB-KW"/>
</dbReference>
<dbReference type="GO" id="GO:0006953">
    <property type="term" value="P:acute-phase response"/>
    <property type="evidence" value="ECO:0007669"/>
    <property type="project" value="UniProtKB-KW"/>
</dbReference>
<dbReference type="GO" id="GO:0045087">
    <property type="term" value="P:innate immune response"/>
    <property type="evidence" value="ECO:0000318"/>
    <property type="project" value="GO_Central"/>
</dbReference>
<dbReference type="GO" id="GO:0032677">
    <property type="term" value="P:regulation of interleukin-8 production"/>
    <property type="evidence" value="ECO:0000250"/>
    <property type="project" value="UniProtKB"/>
</dbReference>
<dbReference type="CDD" id="cd00152">
    <property type="entry name" value="PTX"/>
    <property type="match status" value="1"/>
</dbReference>
<dbReference type="FunFam" id="2.60.120.200:FF:000070">
    <property type="entry name" value="Serum amyloid P-component"/>
    <property type="match status" value="1"/>
</dbReference>
<dbReference type="Gene3D" id="2.60.120.200">
    <property type="match status" value="1"/>
</dbReference>
<dbReference type="InterPro" id="IPR013320">
    <property type="entry name" value="ConA-like_dom_sf"/>
</dbReference>
<dbReference type="InterPro" id="IPR030476">
    <property type="entry name" value="Pentaxin_CS"/>
</dbReference>
<dbReference type="InterPro" id="IPR001759">
    <property type="entry name" value="Pentraxin-related"/>
</dbReference>
<dbReference type="InterPro" id="IPR051005">
    <property type="entry name" value="Pentraxin_domain"/>
</dbReference>
<dbReference type="PANTHER" id="PTHR45869:SF7">
    <property type="entry name" value="C-REACTIVE PROTEIN"/>
    <property type="match status" value="1"/>
</dbReference>
<dbReference type="PANTHER" id="PTHR45869">
    <property type="entry name" value="C-REACTIVE PROTEIN-RELATED"/>
    <property type="match status" value="1"/>
</dbReference>
<dbReference type="Pfam" id="PF00354">
    <property type="entry name" value="Pentaxin"/>
    <property type="match status" value="1"/>
</dbReference>
<dbReference type="PRINTS" id="PR00895">
    <property type="entry name" value="PENTAXIN"/>
</dbReference>
<dbReference type="SMART" id="SM00159">
    <property type="entry name" value="PTX"/>
    <property type="match status" value="1"/>
</dbReference>
<dbReference type="SUPFAM" id="SSF49899">
    <property type="entry name" value="Concanavalin A-like lectins/glucanases"/>
    <property type="match status" value="1"/>
</dbReference>
<dbReference type="PROSITE" id="PS00289">
    <property type="entry name" value="PTX_1"/>
    <property type="match status" value="1"/>
</dbReference>
<dbReference type="PROSITE" id="PS51828">
    <property type="entry name" value="PTX_2"/>
    <property type="match status" value="1"/>
</dbReference>
<keyword id="KW-0011">Acute phase</keyword>
<keyword id="KW-0106">Calcium</keyword>
<keyword id="KW-1015">Disulfide bond</keyword>
<keyword id="KW-0479">Metal-binding</keyword>
<keyword id="KW-0873">Pyrrolidone carboxylic acid</keyword>
<keyword id="KW-1185">Reference proteome</keyword>
<keyword id="KW-0964">Secreted</keyword>
<keyword id="KW-0732">Signal</keyword>
<gene>
    <name type="primary">CRP</name>
    <name type="synonym">PTX1</name>
</gene>
<proteinExistence type="evidence at transcript level"/>
<feature type="signal peptide" evidence="3">
    <location>
        <begin position="1"/>
        <end position="19"/>
    </location>
</feature>
<feature type="chain" id="PRO_0000023530" description="C-reactive protein">
    <location>
        <begin position="20"/>
        <end position="222"/>
    </location>
</feature>
<feature type="domain" description="Pentraxin (PTX)" evidence="4">
    <location>
        <begin position="24"/>
        <end position="222"/>
    </location>
</feature>
<feature type="binding site" evidence="1">
    <location>
        <position position="78"/>
    </location>
    <ligand>
        <name>Ca(2+)</name>
        <dbReference type="ChEBI" id="CHEBI:29108"/>
        <label>1</label>
    </ligand>
</feature>
<feature type="binding site" evidence="1">
    <location>
        <position position="154"/>
    </location>
    <ligand>
        <name>Ca(2+)</name>
        <dbReference type="ChEBI" id="CHEBI:29108"/>
        <label>1</label>
    </ligand>
</feature>
<feature type="binding site" evidence="4">
    <location>
        <position position="154"/>
    </location>
    <ligand>
        <name>Ca(2+)</name>
        <dbReference type="ChEBI" id="CHEBI:29108"/>
        <label>2</label>
    </ligand>
</feature>
<feature type="binding site" evidence="1">
    <location>
        <position position="155"/>
    </location>
    <ligand>
        <name>Ca(2+)</name>
        <dbReference type="ChEBI" id="CHEBI:29108"/>
        <label>1</label>
    </ligand>
</feature>
<feature type="binding site" evidence="1">
    <location>
        <position position="156"/>
    </location>
    <ligand>
        <name>Ca(2+)</name>
        <dbReference type="ChEBI" id="CHEBI:29108"/>
        <label>1</label>
    </ligand>
</feature>
<feature type="binding site" evidence="4">
    <location>
        <position position="156"/>
    </location>
    <ligand>
        <name>Ca(2+)</name>
        <dbReference type="ChEBI" id="CHEBI:29108"/>
        <label>2</label>
    </ligand>
</feature>
<feature type="binding site" evidence="4">
    <location>
        <position position="166"/>
    </location>
    <ligand>
        <name>Ca(2+)</name>
        <dbReference type="ChEBI" id="CHEBI:29108"/>
        <label>2</label>
    </ligand>
</feature>
<feature type="modified residue" description="Pyrrolidone carboxylic acid" evidence="2">
    <location>
        <position position="20"/>
    </location>
</feature>
<feature type="disulfide bond" evidence="4">
    <location>
        <begin position="55"/>
        <end position="113"/>
    </location>
</feature>
<protein>
    <recommendedName>
        <fullName>C-reactive protein</fullName>
    </recommendedName>
</protein>
<comment type="function">
    <text evidence="1">Displays several functions associated with host defense: it promotes agglutination, bacterial capsular swelling, phagocytosis and complement fixation through its calcium-dependent binding to phosphorylcholine. Can interact with DNA and histones and may scavenge nuclear material released from damaged circulating cells (By similarity).</text>
</comment>
<comment type="cofactor">
    <cofactor evidence="1">
        <name>Ca(2+)</name>
        <dbReference type="ChEBI" id="CHEBI:29108"/>
    </cofactor>
    <text evidence="1">Binds 2 calcium ions per subunit.</text>
</comment>
<comment type="subunit">
    <text evidence="1">Homopentamer. Pentraxin (or pentaxin) have a discoid arrangement of 5 non-covalently bound subunits. Interacts with FCN1; may regulate monocyte activation by FCN1 (By similarity).</text>
</comment>
<comment type="subcellular location">
    <subcellularLocation>
        <location evidence="1">Secreted</location>
    </subcellularLocation>
</comment>
<comment type="tissue specificity">
    <text>Found in plasma.</text>
</comment>
<comment type="induction">
    <text evidence="1">The concentration of CRP in plasma increases greatly during acute phase response to tissue injury, infection or other inflammatory stimuli.</text>
</comment>
<comment type="similarity">
    <text evidence="5">Belongs to the pentraxin family.</text>
</comment>
<comment type="online information" name="Protein Spotlight">
    <link uri="https://www.proteinspotlight.org/back_issues/030"/>
    <text>No more Christmas pudding? - Issue 30 of January 2003</text>
</comment>
<evidence type="ECO:0000250" key="1"/>
<evidence type="ECO:0000250" key="2">
    <source>
        <dbReference type="UniProtKB" id="P02741"/>
    </source>
</evidence>
<evidence type="ECO:0000255" key="3"/>
<evidence type="ECO:0000255" key="4">
    <source>
        <dbReference type="PROSITE-ProRule" id="PRU01172"/>
    </source>
</evidence>
<evidence type="ECO:0000305" key="5"/>
<reference key="1">
    <citation type="submission" date="1997-07" db="EMBL/GenBank/DDBJ databases">
        <title>Complementary DNA sequence of porcine C-reactive protein (CRP).</title>
        <authorList>
            <person name="Ozawa A."/>
            <person name="Matsumoto M."/>
            <person name="Kajikawa M."/>
            <person name="Hanazono M."/>
            <person name="Yasue H."/>
        </authorList>
    </citation>
    <scope>NUCLEOTIDE SEQUENCE [MRNA]</scope>
    <source>
        <strain>Landrace</strain>
        <tissue>Liver</tissue>
    </source>
</reference>
<reference key="2">
    <citation type="journal article" date="2004" name="Anim. Genet.">
        <title>Detection of SNPs and linkage and radiation hybrid mapping of the porcine C-reactive protein (CRP) gene.</title>
        <authorList>
            <person name="Chomdej S."/>
            <person name="Ponsuksili S."/>
            <person name="Schellander K."/>
            <person name="Wimmers K."/>
        </authorList>
    </citation>
    <scope>NUCLEOTIDE SEQUENCE [MRNA]</scope>
</reference>
<sequence>MEKLSLCLLVIISLSNAFAQTDMIGKAFVFPKESENSYVSLTARLTKPLTAFTVCLRVYTDLNRDYSLFSYATKTQYNEILLFRGKTAVYSISVGGADVVFKPHQSSEPMHFCMTWESTSGITELWVDGKPMVRRSLKRGYSLGTQASIILGQEQDAFAGGFEKNQCLVGDIGDVNMWDYVLSPEEINTVYAGGTFSPNVLNWRALRYEMSGEVYVKPQLWP</sequence>
<name>CRP_PIG</name>
<organism>
    <name type="scientific">Sus scrofa</name>
    <name type="common">Pig</name>
    <dbReference type="NCBI Taxonomy" id="9823"/>
    <lineage>
        <taxon>Eukaryota</taxon>
        <taxon>Metazoa</taxon>
        <taxon>Chordata</taxon>
        <taxon>Craniata</taxon>
        <taxon>Vertebrata</taxon>
        <taxon>Euteleostomi</taxon>
        <taxon>Mammalia</taxon>
        <taxon>Eutheria</taxon>
        <taxon>Laurasiatheria</taxon>
        <taxon>Artiodactyla</taxon>
        <taxon>Suina</taxon>
        <taxon>Suidae</taxon>
        <taxon>Sus</taxon>
    </lineage>
</organism>